<feature type="chain" id="PRO_0000285617" description="Coatomer subunit beta-2">
    <location>
        <begin position="1"/>
        <end position="948"/>
    </location>
</feature>
<feature type="repeat" description="HEAT 1">
    <location>
        <begin position="49"/>
        <end position="87"/>
    </location>
</feature>
<feature type="repeat" description="HEAT 2">
    <location>
        <begin position="92"/>
        <end position="126"/>
    </location>
</feature>
<feature type="repeat" description="HEAT 3">
    <location>
        <begin position="127"/>
        <end position="164"/>
    </location>
</feature>
<feature type="repeat" description="HEAT 4">
    <location>
        <begin position="274"/>
        <end position="311"/>
    </location>
</feature>
<feature type="repeat" description="HEAT 5">
    <location>
        <begin position="312"/>
        <end position="349"/>
    </location>
</feature>
<feature type="repeat" description="HEAT 6">
    <location>
        <begin position="391"/>
        <end position="428"/>
    </location>
</feature>
<name>COPB2_ARATH</name>
<evidence type="ECO:0000250" key="1"/>
<evidence type="ECO:0000305" key="2"/>
<dbReference type="EMBL" id="AL080283">
    <property type="protein sequence ID" value="CAB45908.1"/>
    <property type="status" value="ALT_SEQ"/>
    <property type="molecule type" value="Genomic_DNA"/>
</dbReference>
<dbReference type="EMBL" id="AL161579">
    <property type="protein sequence ID" value="CAB79867.1"/>
    <property type="status" value="ALT_SEQ"/>
    <property type="molecule type" value="Genomic_DNA"/>
</dbReference>
<dbReference type="EMBL" id="CP002687">
    <property type="protein sequence ID" value="AEE85920.1"/>
    <property type="molecule type" value="Genomic_DNA"/>
</dbReference>
<dbReference type="EMBL" id="CP002687">
    <property type="protein sequence ID" value="ANM67586.1"/>
    <property type="molecule type" value="Genomic_DNA"/>
</dbReference>
<dbReference type="EMBL" id="CP002687">
    <property type="protein sequence ID" value="ANM67587.1"/>
    <property type="molecule type" value="Genomic_DNA"/>
</dbReference>
<dbReference type="EMBL" id="AK228881">
    <property type="status" value="NOT_ANNOTATED_CDS"/>
    <property type="molecule type" value="mRNA"/>
</dbReference>
<dbReference type="PIR" id="T10679">
    <property type="entry name" value="T10679"/>
</dbReference>
<dbReference type="RefSeq" id="NP_001329405.1">
    <property type="nucleotide sequence ID" value="NM_001342090.1"/>
</dbReference>
<dbReference type="RefSeq" id="NP_001329406.1">
    <property type="nucleotide sequence ID" value="NM_001342089.1"/>
</dbReference>
<dbReference type="RefSeq" id="NP_194877.2">
    <property type="nucleotide sequence ID" value="NM_119298.3"/>
</dbReference>
<dbReference type="SMR" id="Q9SV20"/>
<dbReference type="BioGRID" id="14562">
    <property type="interactions" value="27"/>
</dbReference>
<dbReference type="FunCoup" id="Q9SV20">
    <property type="interactions" value="4931"/>
</dbReference>
<dbReference type="IntAct" id="Q9SV20">
    <property type="interactions" value="2"/>
</dbReference>
<dbReference type="STRING" id="3702.Q9SV20"/>
<dbReference type="iPTMnet" id="Q9SV20"/>
<dbReference type="PaxDb" id="3702-AT4G31490.1"/>
<dbReference type="ProteomicsDB" id="241165"/>
<dbReference type="EnsemblPlants" id="AT4G31490.1">
    <property type="protein sequence ID" value="AT4G31490.1"/>
    <property type="gene ID" value="AT4G31490"/>
</dbReference>
<dbReference type="EnsemblPlants" id="AT4G31490.2">
    <property type="protein sequence ID" value="AT4G31490.2"/>
    <property type="gene ID" value="AT4G31490"/>
</dbReference>
<dbReference type="EnsemblPlants" id="AT4G31490.3">
    <property type="protein sequence ID" value="AT4G31490.3"/>
    <property type="gene ID" value="AT4G31490"/>
</dbReference>
<dbReference type="GeneID" id="829276"/>
<dbReference type="Gramene" id="AT4G31490.1">
    <property type="protein sequence ID" value="AT4G31490.1"/>
    <property type="gene ID" value="AT4G31490"/>
</dbReference>
<dbReference type="Gramene" id="AT4G31490.2">
    <property type="protein sequence ID" value="AT4G31490.2"/>
    <property type="gene ID" value="AT4G31490"/>
</dbReference>
<dbReference type="Gramene" id="AT4G31490.3">
    <property type="protein sequence ID" value="AT4G31490.3"/>
    <property type="gene ID" value="AT4G31490"/>
</dbReference>
<dbReference type="KEGG" id="ath:AT4G31490"/>
<dbReference type="Araport" id="AT4G31490"/>
<dbReference type="TAIR" id="AT4G31490"/>
<dbReference type="eggNOG" id="KOG1058">
    <property type="taxonomic scope" value="Eukaryota"/>
</dbReference>
<dbReference type="HOGENOM" id="CLU_006949_0_0_1"/>
<dbReference type="InParanoid" id="Q9SV20"/>
<dbReference type="OMA" id="KDVMVDM"/>
<dbReference type="OrthoDB" id="10261439at2759"/>
<dbReference type="PhylomeDB" id="Q9SV20"/>
<dbReference type="PRO" id="PR:Q9SV20"/>
<dbReference type="Proteomes" id="UP000006548">
    <property type="component" value="Chromosome 4"/>
</dbReference>
<dbReference type="ExpressionAtlas" id="Q9SV20">
    <property type="expression patterns" value="baseline and differential"/>
</dbReference>
<dbReference type="GO" id="GO:0030126">
    <property type="term" value="C:COPI vesicle coat"/>
    <property type="evidence" value="ECO:0007669"/>
    <property type="project" value="InterPro"/>
</dbReference>
<dbReference type="GO" id="GO:0000139">
    <property type="term" value="C:Golgi membrane"/>
    <property type="evidence" value="ECO:0007669"/>
    <property type="project" value="UniProtKB-SubCell"/>
</dbReference>
<dbReference type="GO" id="GO:0005886">
    <property type="term" value="C:plasma membrane"/>
    <property type="evidence" value="ECO:0007005"/>
    <property type="project" value="TAIR"/>
</dbReference>
<dbReference type="GO" id="GO:0005198">
    <property type="term" value="F:structural molecule activity"/>
    <property type="evidence" value="ECO:0007669"/>
    <property type="project" value="InterPro"/>
</dbReference>
<dbReference type="GO" id="GO:0006886">
    <property type="term" value="P:intracellular protein transport"/>
    <property type="evidence" value="ECO:0007669"/>
    <property type="project" value="InterPro"/>
</dbReference>
<dbReference type="GO" id="GO:0016192">
    <property type="term" value="P:vesicle-mediated transport"/>
    <property type="evidence" value="ECO:0007669"/>
    <property type="project" value="UniProtKB-KW"/>
</dbReference>
<dbReference type="FunFam" id="1.25.10.10:FF:000166">
    <property type="entry name" value="Coatomer subunit beta"/>
    <property type="match status" value="1"/>
</dbReference>
<dbReference type="Gene3D" id="1.25.10.10">
    <property type="entry name" value="Leucine-rich Repeat Variant"/>
    <property type="match status" value="1"/>
</dbReference>
<dbReference type="InterPro" id="IPR011989">
    <property type="entry name" value="ARM-like"/>
</dbReference>
<dbReference type="InterPro" id="IPR016024">
    <property type="entry name" value="ARM-type_fold"/>
</dbReference>
<dbReference type="InterPro" id="IPR002553">
    <property type="entry name" value="Clathrin/coatomer_adapt-like_N"/>
</dbReference>
<dbReference type="InterPro" id="IPR011710">
    <property type="entry name" value="Coatomer_bsu_C"/>
</dbReference>
<dbReference type="InterPro" id="IPR016460">
    <property type="entry name" value="COPB1"/>
</dbReference>
<dbReference type="InterPro" id="IPR029446">
    <property type="entry name" value="COPB1_appendage_platform_dom"/>
</dbReference>
<dbReference type="PANTHER" id="PTHR10635">
    <property type="entry name" value="COATOMER SUBUNIT BETA"/>
    <property type="match status" value="1"/>
</dbReference>
<dbReference type="PANTHER" id="PTHR10635:SF0">
    <property type="entry name" value="COATOMER SUBUNIT BETA"/>
    <property type="match status" value="1"/>
</dbReference>
<dbReference type="Pfam" id="PF01602">
    <property type="entry name" value="Adaptin_N"/>
    <property type="match status" value="1"/>
</dbReference>
<dbReference type="Pfam" id="PF07718">
    <property type="entry name" value="Coatamer_beta_C"/>
    <property type="match status" value="1"/>
</dbReference>
<dbReference type="Pfam" id="PF14806">
    <property type="entry name" value="Coatomer_b_Cpla"/>
    <property type="match status" value="1"/>
</dbReference>
<dbReference type="PIRSF" id="PIRSF005727">
    <property type="entry name" value="Coatomer_beta_subunit"/>
    <property type="match status" value="1"/>
</dbReference>
<dbReference type="SUPFAM" id="SSF48371">
    <property type="entry name" value="ARM repeat"/>
    <property type="match status" value="1"/>
</dbReference>
<proteinExistence type="evidence at transcript level"/>
<gene>
    <name type="ordered locus">At4g31490</name>
    <name type="ORF">F3L17.60</name>
</gene>
<organism>
    <name type="scientific">Arabidopsis thaliana</name>
    <name type="common">Mouse-ear cress</name>
    <dbReference type="NCBI Taxonomy" id="3702"/>
    <lineage>
        <taxon>Eukaryota</taxon>
        <taxon>Viridiplantae</taxon>
        <taxon>Streptophyta</taxon>
        <taxon>Embryophyta</taxon>
        <taxon>Tracheophyta</taxon>
        <taxon>Spermatophyta</taxon>
        <taxon>Magnoliopsida</taxon>
        <taxon>eudicotyledons</taxon>
        <taxon>Gunneridae</taxon>
        <taxon>Pentapetalae</taxon>
        <taxon>rosids</taxon>
        <taxon>malvids</taxon>
        <taxon>Brassicales</taxon>
        <taxon>Brassicaceae</taxon>
        <taxon>Camelineae</taxon>
        <taxon>Arabidopsis</taxon>
    </lineage>
</organism>
<protein>
    <recommendedName>
        <fullName>Coatomer subunit beta-2</fullName>
    </recommendedName>
    <alternativeName>
        <fullName>Beta-coat protein 2</fullName>
        <shortName>Beta-COP 2</shortName>
    </alternativeName>
</protein>
<comment type="function">
    <text evidence="1">The coatomer is a cytosolic protein complex that binds to dilysine motifs and reversibly associates with Golgi non-clathrin-coated vesicles, which further mediate biosynthetic protein transport from the ER, via the Golgi up to the trans Golgi network. Coatomer complex is required for budding from Golgi membranes, and is essential for the retrograde Golgi-to-ER transport of dilysine-tagged proteins (By similarity).</text>
</comment>
<comment type="subunit">
    <text evidence="1">Oligomeric complex that consists of at least the alpha, beta, beta', gamma, delta, epsilon and zeta subunits.</text>
</comment>
<comment type="subcellular location">
    <subcellularLocation>
        <location evidence="1">Cytoplasm</location>
    </subcellularLocation>
    <subcellularLocation>
        <location evidence="1">Golgi apparatus membrane</location>
        <topology evidence="1">Peripheral membrane protein</topology>
        <orientation evidence="1">Cytoplasmic side</orientation>
    </subcellularLocation>
    <subcellularLocation>
        <location evidence="1">Cytoplasmic vesicle</location>
        <location evidence="1">COPI-coated vesicle membrane</location>
        <topology evidence="1">Peripheral membrane protein</topology>
        <orientation evidence="1">Cytoplasmic side</orientation>
    </subcellularLocation>
    <text evidence="1">The coatomer is cytoplasmic or polymerized on the cytoplasmic side of the Golgi, as well as on the vesicles/buds originating from it.</text>
</comment>
<comment type="sequence caution" evidence="2">
    <conflict type="frameshift">
        <sequence resource="EMBL" id="AK228881"/>
    </conflict>
</comment>
<comment type="sequence caution" evidence="2">
    <conflict type="erroneous gene model prediction">
        <sequence resource="EMBL-CDS" id="CAB45908"/>
    </conflict>
</comment>
<comment type="sequence caution" evidence="2">
    <conflict type="erroneous gene model prediction">
        <sequence resource="EMBL-CDS" id="CAB79867"/>
    </conflict>
</comment>
<sequence>MDKSSTMLVHYDKGTPAVANEIKEALEGNDVEAKVDAMKKAIMLLLNGETIPQLFITIIRYVLPSEDHTIQKLLLLYLELIEKTDSKGKVLPEMILICQNLRNNLQHPNEYIRGVTLRFLCRMKETEIVEPLTPSVLQNLEHRHPFVRRNAILAIMSIYKLPHGDQLFVDAPEMIEKVLSTEQDPSAKRNAFLMLFTCAEERAVNYLLSNVDKVSDWNESLQMVVLELIRSVCKTKPAEKGKYIKIIISLLSATSSAVIYECAGTLVSLSSAPTAIRAAANTYCQLLLSQSDNNVKLILLDRLYELKTLHRDIMVELIIDVLRALSSPNLDIRRKTLDIALDLITHHNINEVVQMLKKEVVKTQSGELEKNGEYRQMLIQAIHACAVKFPEVASTVVHLLMDFLGDSNVASALDVVVFVREIIETNPKLRVSIITRLLDTFYQIRAGKVCPCALWIIGEYCLSLSEVESGISTITQCLGELPFYSVSEESEPTETSKKIQPTSSAMVSSRKPVILADGTYATQSAASETTFSSPTVVQGSLTSGNLRALLLTGDFFLGAVVACTLTKLVLRLEEVQSSKTEVNKTVSQALLIMVSILQLGQSPVSPHPIDNDSYERIMLCIKLLCHRNVEMKKIWLESCRQSFVKMISEKQLREMEELKAKTQTTHAQPDDLIDFFHLKSRKGMSQLELEDQVQDDLKRATGEFTKDENDANKLNRILQLTGFSDPVYAEAYVTVHHYDIALEVTVINRTKETLQNLCLELATMGDLKLVERPQNYSLAPERSMQIKANIKVSSTETGVIFGNIVYETSNVMERNVVVLNDIHIDIMDYISPAVCSEVAFRTMWAEFEWENKVAVNTTIQNEREFLDHIIKSTNMKCLTAPSAIAGECGFLAANLYAKSVFGEDALVNLSIEKQTDGTLSGYIRIRSKTQGIALSLGDKITLKQKGGS</sequence>
<keyword id="KW-0963">Cytoplasm</keyword>
<keyword id="KW-0968">Cytoplasmic vesicle</keyword>
<keyword id="KW-0931">ER-Golgi transport</keyword>
<keyword id="KW-0333">Golgi apparatus</keyword>
<keyword id="KW-0472">Membrane</keyword>
<keyword id="KW-0653">Protein transport</keyword>
<keyword id="KW-1185">Reference proteome</keyword>
<keyword id="KW-0677">Repeat</keyword>
<keyword id="KW-0813">Transport</keyword>
<reference key="1">
    <citation type="journal article" date="1999" name="Nature">
        <title>Sequence and analysis of chromosome 4 of the plant Arabidopsis thaliana.</title>
        <authorList>
            <person name="Mayer K.F.X."/>
            <person name="Schueller C."/>
            <person name="Wambutt R."/>
            <person name="Murphy G."/>
            <person name="Volckaert G."/>
            <person name="Pohl T."/>
            <person name="Duesterhoeft A."/>
            <person name="Stiekema W."/>
            <person name="Entian K.-D."/>
            <person name="Terryn N."/>
            <person name="Harris B."/>
            <person name="Ansorge W."/>
            <person name="Brandt P."/>
            <person name="Grivell L.A."/>
            <person name="Rieger M."/>
            <person name="Weichselgartner M."/>
            <person name="de Simone V."/>
            <person name="Obermaier B."/>
            <person name="Mache R."/>
            <person name="Mueller M."/>
            <person name="Kreis M."/>
            <person name="Delseny M."/>
            <person name="Puigdomenech P."/>
            <person name="Watson M."/>
            <person name="Schmidtheini T."/>
            <person name="Reichert B."/>
            <person name="Portetelle D."/>
            <person name="Perez-Alonso M."/>
            <person name="Boutry M."/>
            <person name="Bancroft I."/>
            <person name="Vos P."/>
            <person name="Hoheisel J."/>
            <person name="Zimmermann W."/>
            <person name="Wedler H."/>
            <person name="Ridley P."/>
            <person name="Langham S.-A."/>
            <person name="McCullagh B."/>
            <person name="Bilham L."/>
            <person name="Robben J."/>
            <person name="van der Schueren J."/>
            <person name="Grymonprez B."/>
            <person name="Chuang Y.-J."/>
            <person name="Vandenbussche F."/>
            <person name="Braeken M."/>
            <person name="Weltjens I."/>
            <person name="Voet M."/>
            <person name="Bastiaens I."/>
            <person name="Aert R."/>
            <person name="Defoor E."/>
            <person name="Weitzenegger T."/>
            <person name="Bothe G."/>
            <person name="Ramsperger U."/>
            <person name="Hilbert H."/>
            <person name="Braun M."/>
            <person name="Holzer E."/>
            <person name="Brandt A."/>
            <person name="Peters S."/>
            <person name="van Staveren M."/>
            <person name="Dirkse W."/>
            <person name="Mooijman P."/>
            <person name="Klein Lankhorst R."/>
            <person name="Rose M."/>
            <person name="Hauf J."/>
            <person name="Koetter P."/>
            <person name="Berneiser S."/>
            <person name="Hempel S."/>
            <person name="Feldpausch M."/>
            <person name="Lamberth S."/>
            <person name="Van den Daele H."/>
            <person name="De Keyser A."/>
            <person name="Buysshaert C."/>
            <person name="Gielen J."/>
            <person name="Villarroel R."/>
            <person name="De Clercq R."/>
            <person name="van Montagu M."/>
            <person name="Rogers J."/>
            <person name="Cronin A."/>
            <person name="Quail M.A."/>
            <person name="Bray-Allen S."/>
            <person name="Clark L."/>
            <person name="Doggett J."/>
            <person name="Hall S."/>
            <person name="Kay M."/>
            <person name="Lennard N."/>
            <person name="McLay K."/>
            <person name="Mayes R."/>
            <person name="Pettett A."/>
            <person name="Rajandream M.A."/>
            <person name="Lyne M."/>
            <person name="Benes V."/>
            <person name="Rechmann S."/>
            <person name="Borkova D."/>
            <person name="Bloecker H."/>
            <person name="Scharfe M."/>
            <person name="Grimm M."/>
            <person name="Loehnert T.-H."/>
            <person name="Dose S."/>
            <person name="de Haan M."/>
            <person name="Maarse A.C."/>
            <person name="Schaefer M."/>
            <person name="Mueller-Auer S."/>
            <person name="Gabel C."/>
            <person name="Fuchs M."/>
            <person name="Fartmann B."/>
            <person name="Granderath K."/>
            <person name="Dauner D."/>
            <person name="Herzl A."/>
            <person name="Neumann S."/>
            <person name="Argiriou A."/>
            <person name="Vitale D."/>
            <person name="Liguori R."/>
            <person name="Piravandi E."/>
            <person name="Massenet O."/>
            <person name="Quigley F."/>
            <person name="Clabauld G."/>
            <person name="Muendlein A."/>
            <person name="Felber R."/>
            <person name="Schnabl S."/>
            <person name="Hiller R."/>
            <person name="Schmidt W."/>
            <person name="Lecharny A."/>
            <person name="Aubourg S."/>
            <person name="Chefdor F."/>
            <person name="Cooke R."/>
            <person name="Berger C."/>
            <person name="Monfort A."/>
            <person name="Casacuberta E."/>
            <person name="Gibbons T."/>
            <person name="Weber N."/>
            <person name="Vandenbol M."/>
            <person name="Bargues M."/>
            <person name="Terol J."/>
            <person name="Torres A."/>
            <person name="Perez-Perez A."/>
            <person name="Purnelle B."/>
            <person name="Bent E."/>
            <person name="Johnson S."/>
            <person name="Tacon D."/>
            <person name="Jesse T."/>
            <person name="Heijnen L."/>
            <person name="Schwarz S."/>
            <person name="Scholler P."/>
            <person name="Heber S."/>
            <person name="Francs P."/>
            <person name="Bielke C."/>
            <person name="Frishman D."/>
            <person name="Haase D."/>
            <person name="Lemcke K."/>
            <person name="Mewes H.-W."/>
            <person name="Stocker S."/>
            <person name="Zaccaria P."/>
            <person name="Bevan M."/>
            <person name="Wilson R.K."/>
            <person name="de la Bastide M."/>
            <person name="Habermann K."/>
            <person name="Parnell L."/>
            <person name="Dedhia N."/>
            <person name="Gnoj L."/>
            <person name="Schutz K."/>
            <person name="Huang E."/>
            <person name="Spiegel L."/>
            <person name="Sekhon M."/>
            <person name="Murray J."/>
            <person name="Sheet P."/>
            <person name="Cordes M."/>
            <person name="Abu-Threideh J."/>
            <person name="Stoneking T."/>
            <person name="Kalicki J."/>
            <person name="Graves T."/>
            <person name="Harmon G."/>
            <person name="Edwards J."/>
            <person name="Latreille P."/>
            <person name="Courtney L."/>
            <person name="Cloud J."/>
            <person name="Abbott A."/>
            <person name="Scott K."/>
            <person name="Johnson D."/>
            <person name="Minx P."/>
            <person name="Bentley D."/>
            <person name="Fulton B."/>
            <person name="Miller N."/>
            <person name="Greco T."/>
            <person name="Kemp K."/>
            <person name="Kramer J."/>
            <person name="Fulton L."/>
            <person name="Mardis E."/>
            <person name="Dante M."/>
            <person name="Pepin K."/>
            <person name="Hillier L.W."/>
            <person name="Nelson J."/>
            <person name="Spieth J."/>
            <person name="Ryan E."/>
            <person name="Andrews S."/>
            <person name="Geisel C."/>
            <person name="Layman D."/>
            <person name="Du H."/>
            <person name="Ali J."/>
            <person name="Berghoff A."/>
            <person name="Jones K."/>
            <person name="Drone K."/>
            <person name="Cotton M."/>
            <person name="Joshu C."/>
            <person name="Antonoiu B."/>
            <person name="Zidanic M."/>
            <person name="Strong C."/>
            <person name="Sun H."/>
            <person name="Lamar B."/>
            <person name="Yordan C."/>
            <person name="Ma P."/>
            <person name="Zhong J."/>
            <person name="Preston R."/>
            <person name="Vil D."/>
            <person name="Shekher M."/>
            <person name="Matero A."/>
            <person name="Shah R."/>
            <person name="Swaby I.K."/>
            <person name="O'Shaughnessy A."/>
            <person name="Rodriguez M."/>
            <person name="Hoffman J."/>
            <person name="Till S."/>
            <person name="Granat S."/>
            <person name="Shohdy N."/>
            <person name="Hasegawa A."/>
            <person name="Hameed A."/>
            <person name="Lodhi M."/>
            <person name="Johnson A."/>
            <person name="Chen E."/>
            <person name="Marra M.A."/>
            <person name="Martienssen R."/>
            <person name="McCombie W.R."/>
        </authorList>
    </citation>
    <scope>NUCLEOTIDE SEQUENCE [LARGE SCALE GENOMIC DNA]</scope>
    <source>
        <strain>cv. Columbia</strain>
    </source>
</reference>
<reference key="2">
    <citation type="journal article" date="2017" name="Plant J.">
        <title>Araport11: a complete reannotation of the Arabidopsis thaliana reference genome.</title>
        <authorList>
            <person name="Cheng C.Y."/>
            <person name="Krishnakumar V."/>
            <person name="Chan A.P."/>
            <person name="Thibaud-Nissen F."/>
            <person name="Schobel S."/>
            <person name="Town C.D."/>
        </authorList>
    </citation>
    <scope>GENOME REANNOTATION</scope>
    <source>
        <strain>cv. Columbia</strain>
    </source>
</reference>
<reference key="3">
    <citation type="submission" date="2006-07" db="EMBL/GenBank/DDBJ databases">
        <title>Large-scale analysis of RIKEN Arabidopsis full-length (RAFL) cDNAs.</title>
        <authorList>
            <person name="Totoki Y."/>
            <person name="Seki M."/>
            <person name="Ishida J."/>
            <person name="Nakajima M."/>
            <person name="Enju A."/>
            <person name="Kamiya A."/>
            <person name="Narusaka M."/>
            <person name="Shin-i T."/>
            <person name="Nakagawa M."/>
            <person name="Sakamoto N."/>
            <person name="Oishi K."/>
            <person name="Kohara Y."/>
            <person name="Kobayashi M."/>
            <person name="Toyoda A."/>
            <person name="Sakaki Y."/>
            <person name="Sakurai T."/>
            <person name="Iida K."/>
            <person name="Akiyama K."/>
            <person name="Satou M."/>
            <person name="Toyoda T."/>
            <person name="Konagaya A."/>
            <person name="Carninci P."/>
            <person name="Kawai J."/>
            <person name="Hayashizaki Y."/>
            <person name="Shinozaki K."/>
        </authorList>
    </citation>
    <scope>NUCLEOTIDE SEQUENCE [LARGE SCALE MRNA]</scope>
    <source>
        <strain>cv. Columbia</strain>
    </source>
</reference>
<accession>Q9SV20</accession>